<accession>Q9FZE1</accession>
<accession>Q8LG68</accession>
<organism>
    <name type="scientific">Arabidopsis thaliana</name>
    <name type="common">Mouse-ear cress</name>
    <dbReference type="NCBI Taxonomy" id="3702"/>
    <lineage>
        <taxon>Eukaryota</taxon>
        <taxon>Viridiplantae</taxon>
        <taxon>Streptophyta</taxon>
        <taxon>Embryophyta</taxon>
        <taxon>Tracheophyta</taxon>
        <taxon>Spermatophyta</taxon>
        <taxon>Magnoliopsida</taxon>
        <taxon>eudicotyledons</taxon>
        <taxon>Gunneridae</taxon>
        <taxon>Pentapetalae</taxon>
        <taxon>rosids</taxon>
        <taxon>malvids</taxon>
        <taxon>Brassicales</taxon>
        <taxon>Brassicaceae</taxon>
        <taxon>Camelineae</taxon>
        <taxon>Arabidopsis</taxon>
    </lineage>
</organism>
<feature type="chain" id="PRO_0000422265" description="UDP-glucose 6-dehydrogenase 1">
    <location>
        <begin position="1"/>
        <end position="481"/>
    </location>
</feature>
<feature type="active site" description="Nucleophile" evidence="1">
    <location>
        <position position="272"/>
    </location>
</feature>
<feature type="binding site" evidence="1">
    <location>
        <begin position="8"/>
        <end position="13"/>
    </location>
    <ligand>
        <name>NAD(+)</name>
        <dbReference type="ChEBI" id="CHEBI:57540"/>
    </ligand>
</feature>
<feature type="binding site" evidence="1">
    <location>
        <position position="33"/>
    </location>
    <ligand>
        <name>NAD(+)</name>
        <dbReference type="ChEBI" id="CHEBI:57540"/>
    </ligand>
</feature>
<feature type="binding site" evidence="1">
    <location>
        <position position="38"/>
    </location>
    <ligand>
        <name>NAD(+)</name>
        <dbReference type="ChEBI" id="CHEBI:57540"/>
    </ligand>
</feature>
<feature type="binding site" evidence="1">
    <location>
        <begin position="86"/>
        <end position="90"/>
    </location>
    <ligand>
        <name>NAD(+)</name>
        <dbReference type="ChEBI" id="CHEBI:57540"/>
    </ligand>
</feature>
<feature type="binding site" evidence="1">
    <location>
        <begin position="127"/>
        <end position="128"/>
    </location>
    <ligand>
        <name>NAD(+)</name>
        <dbReference type="ChEBI" id="CHEBI:57540"/>
    </ligand>
</feature>
<feature type="binding site" evidence="1">
    <location>
        <begin position="157"/>
        <end position="161"/>
    </location>
    <ligand>
        <name>substrate</name>
    </ligand>
</feature>
<feature type="binding site" evidence="1">
    <location>
        <position position="161"/>
    </location>
    <ligand>
        <name>NAD(+)</name>
        <dbReference type="ChEBI" id="CHEBI:57540"/>
    </ligand>
</feature>
<feature type="binding site" evidence="1">
    <location>
        <begin position="216"/>
        <end position="223"/>
    </location>
    <ligand>
        <name>substrate</name>
    </ligand>
</feature>
<feature type="binding site" evidence="1">
    <location>
        <begin position="256"/>
        <end position="269"/>
    </location>
    <ligand>
        <name>substrate</name>
    </ligand>
</feature>
<feature type="binding site" evidence="1">
    <location>
        <begin position="272"/>
        <end position="275"/>
    </location>
    <ligand>
        <name>NAD(+)</name>
        <dbReference type="ChEBI" id="CHEBI:57540"/>
    </ligand>
</feature>
<feature type="binding site" evidence="1">
    <location>
        <begin position="334"/>
        <end position="335"/>
    </location>
    <ligand>
        <name>substrate</name>
    </ligand>
</feature>
<feature type="binding site" evidence="1">
    <location>
        <position position="342"/>
    </location>
    <ligand>
        <name>NAD(+)</name>
        <dbReference type="ChEBI" id="CHEBI:57540"/>
    </ligand>
</feature>
<feature type="binding site" evidence="1">
    <location>
        <position position="448"/>
    </location>
    <ligand>
        <name>substrate</name>
    </ligand>
</feature>
<feature type="sequence conflict" description="In Ref. 4; AAM61009." evidence="5" ref="4">
    <original>A</original>
    <variation>P</variation>
    <location>
        <position position="114"/>
    </location>
</feature>
<reference key="1">
    <citation type="journal article" date="2000" name="Nature">
        <title>Sequence and analysis of chromosome 1 of the plant Arabidopsis thaliana.</title>
        <authorList>
            <person name="Theologis A."/>
            <person name="Ecker J.R."/>
            <person name="Palm C.J."/>
            <person name="Federspiel N.A."/>
            <person name="Kaul S."/>
            <person name="White O."/>
            <person name="Alonso J."/>
            <person name="Altafi H."/>
            <person name="Araujo R."/>
            <person name="Bowman C.L."/>
            <person name="Brooks S.Y."/>
            <person name="Buehler E."/>
            <person name="Chan A."/>
            <person name="Chao Q."/>
            <person name="Chen H."/>
            <person name="Cheuk R.F."/>
            <person name="Chin C.W."/>
            <person name="Chung M.K."/>
            <person name="Conn L."/>
            <person name="Conway A.B."/>
            <person name="Conway A.R."/>
            <person name="Creasy T.H."/>
            <person name="Dewar K."/>
            <person name="Dunn P."/>
            <person name="Etgu P."/>
            <person name="Feldblyum T.V."/>
            <person name="Feng J.-D."/>
            <person name="Fong B."/>
            <person name="Fujii C.Y."/>
            <person name="Gill J.E."/>
            <person name="Goldsmith A.D."/>
            <person name="Haas B."/>
            <person name="Hansen N.F."/>
            <person name="Hughes B."/>
            <person name="Huizar L."/>
            <person name="Hunter J.L."/>
            <person name="Jenkins J."/>
            <person name="Johnson-Hopson C."/>
            <person name="Khan S."/>
            <person name="Khaykin E."/>
            <person name="Kim C.J."/>
            <person name="Koo H.L."/>
            <person name="Kremenetskaia I."/>
            <person name="Kurtz D.B."/>
            <person name="Kwan A."/>
            <person name="Lam B."/>
            <person name="Langin-Hooper S."/>
            <person name="Lee A."/>
            <person name="Lee J.M."/>
            <person name="Lenz C.A."/>
            <person name="Li J.H."/>
            <person name="Li Y.-P."/>
            <person name="Lin X."/>
            <person name="Liu S.X."/>
            <person name="Liu Z.A."/>
            <person name="Luros J.S."/>
            <person name="Maiti R."/>
            <person name="Marziali A."/>
            <person name="Militscher J."/>
            <person name="Miranda M."/>
            <person name="Nguyen M."/>
            <person name="Nierman W.C."/>
            <person name="Osborne B.I."/>
            <person name="Pai G."/>
            <person name="Peterson J."/>
            <person name="Pham P.K."/>
            <person name="Rizzo M."/>
            <person name="Rooney T."/>
            <person name="Rowley D."/>
            <person name="Sakano H."/>
            <person name="Salzberg S.L."/>
            <person name="Schwartz J.R."/>
            <person name="Shinn P."/>
            <person name="Southwick A.M."/>
            <person name="Sun H."/>
            <person name="Tallon L.J."/>
            <person name="Tambunga G."/>
            <person name="Toriumi M.J."/>
            <person name="Town C.D."/>
            <person name="Utterback T."/>
            <person name="Van Aken S."/>
            <person name="Vaysberg M."/>
            <person name="Vysotskaia V.S."/>
            <person name="Walker M."/>
            <person name="Wu D."/>
            <person name="Yu G."/>
            <person name="Fraser C.M."/>
            <person name="Venter J.C."/>
            <person name="Davis R.W."/>
        </authorList>
    </citation>
    <scope>NUCLEOTIDE SEQUENCE [LARGE SCALE GENOMIC DNA]</scope>
    <source>
        <strain>cv. Columbia</strain>
    </source>
</reference>
<reference key="2">
    <citation type="journal article" date="2017" name="Plant J.">
        <title>Araport11: a complete reannotation of the Arabidopsis thaliana reference genome.</title>
        <authorList>
            <person name="Cheng C.Y."/>
            <person name="Krishnakumar V."/>
            <person name="Chan A.P."/>
            <person name="Thibaud-Nissen F."/>
            <person name="Schobel S."/>
            <person name="Town C.D."/>
        </authorList>
    </citation>
    <scope>GENOME REANNOTATION</scope>
    <source>
        <strain>cv. Columbia</strain>
    </source>
</reference>
<reference key="3">
    <citation type="journal article" date="2003" name="Science">
        <title>Empirical analysis of transcriptional activity in the Arabidopsis genome.</title>
        <authorList>
            <person name="Yamada K."/>
            <person name="Lim J."/>
            <person name="Dale J.M."/>
            <person name="Chen H."/>
            <person name="Shinn P."/>
            <person name="Palm C.J."/>
            <person name="Southwick A.M."/>
            <person name="Wu H.C."/>
            <person name="Kim C.J."/>
            <person name="Nguyen M."/>
            <person name="Pham P.K."/>
            <person name="Cheuk R.F."/>
            <person name="Karlin-Newmann G."/>
            <person name="Liu S.X."/>
            <person name="Lam B."/>
            <person name="Sakano H."/>
            <person name="Wu T."/>
            <person name="Yu G."/>
            <person name="Miranda M."/>
            <person name="Quach H.L."/>
            <person name="Tripp M."/>
            <person name="Chang C.H."/>
            <person name="Lee J.M."/>
            <person name="Toriumi M.J."/>
            <person name="Chan M.M."/>
            <person name="Tang C.C."/>
            <person name="Onodera C.S."/>
            <person name="Deng J.M."/>
            <person name="Akiyama K."/>
            <person name="Ansari Y."/>
            <person name="Arakawa T."/>
            <person name="Banh J."/>
            <person name="Banno F."/>
            <person name="Bowser L."/>
            <person name="Brooks S.Y."/>
            <person name="Carninci P."/>
            <person name="Chao Q."/>
            <person name="Choy N."/>
            <person name="Enju A."/>
            <person name="Goldsmith A.D."/>
            <person name="Gurjal M."/>
            <person name="Hansen N.F."/>
            <person name="Hayashizaki Y."/>
            <person name="Johnson-Hopson C."/>
            <person name="Hsuan V.W."/>
            <person name="Iida K."/>
            <person name="Karnes M."/>
            <person name="Khan S."/>
            <person name="Koesema E."/>
            <person name="Ishida J."/>
            <person name="Jiang P.X."/>
            <person name="Jones T."/>
            <person name="Kawai J."/>
            <person name="Kamiya A."/>
            <person name="Meyers C."/>
            <person name="Nakajima M."/>
            <person name="Narusaka M."/>
            <person name="Seki M."/>
            <person name="Sakurai T."/>
            <person name="Satou M."/>
            <person name="Tamse R."/>
            <person name="Vaysberg M."/>
            <person name="Wallender E.K."/>
            <person name="Wong C."/>
            <person name="Yamamura Y."/>
            <person name="Yuan S."/>
            <person name="Shinozaki K."/>
            <person name="Davis R.W."/>
            <person name="Theologis A."/>
            <person name="Ecker J.R."/>
        </authorList>
    </citation>
    <scope>NUCLEOTIDE SEQUENCE [LARGE SCALE MRNA]</scope>
    <source>
        <strain>cv. Columbia</strain>
    </source>
</reference>
<reference key="4">
    <citation type="submission" date="2002-03" db="EMBL/GenBank/DDBJ databases">
        <title>Full-length cDNA from Arabidopsis thaliana.</title>
        <authorList>
            <person name="Brover V.V."/>
            <person name="Troukhan M.E."/>
            <person name="Alexandrov N.A."/>
            <person name="Lu Y.-P."/>
            <person name="Flavell R.B."/>
            <person name="Feldmann K.A."/>
        </authorList>
    </citation>
    <scope>NUCLEOTIDE SEQUENCE [LARGE SCALE MRNA]</scope>
</reference>
<reference key="5">
    <citation type="journal article" date="2001" name="Plant Mol. Biol.">
        <title>Molecular genetics of nucleotide sugar interconversion pathways in plants.</title>
        <authorList>
            <person name="Reiter W.-D."/>
            <person name="Vanzin G.F."/>
        </authorList>
    </citation>
    <scope>GENE FAMILY</scope>
</reference>
<reference key="6">
    <citation type="journal article" date="2004" name="Curr. Opin. Plant Biol.">
        <title>Nucleotide sugar interconversions and cell wall biosynthesis: how to bring the inside to the outside.</title>
        <authorList>
            <person name="Seifert G.J."/>
        </authorList>
    </citation>
    <scope>REVIEW</scope>
</reference>
<reference key="7">
    <citation type="journal article" date="2006" name="FEBS J.">
        <title>Reconstruction of de novo pathway for synthesis of UDP-glucuronic acid and UDP-xylose from intrinsic UDP-glucose in Saccharomyces cerevisiae.</title>
        <authorList>
            <person name="Oka T."/>
            <person name="Jigami Y."/>
        </authorList>
    </citation>
    <scope>FUNCTION</scope>
    <scope>ACTIVITY REGULATION</scope>
    <scope>CATALYTIC ACTIVITY</scope>
</reference>
<reference key="8">
    <citation type="journal article" date="2007" name="J. Exp. Bot.">
        <title>Genome-wide analysis of the UDP-glucose dehydrogenase gene family in Arabidopsis, a key enzyme for matrix polysaccharides in cell walls.</title>
        <authorList>
            <person name="Klinghammer M."/>
            <person name="Tenhaken R."/>
        </authorList>
    </citation>
    <scope>GENE FAMILY</scope>
    <scope>NOMENCLATURE</scope>
    <scope>DEVELOPMENTAL STAGE</scope>
</reference>
<reference key="9">
    <citation type="journal article" date="2012" name="PLoS ONE">
        <title>Cell wall ingrowths in nematode induced syncytia require UGD2 and UGD3.</title>
        <authorList>
            <person name="Siddique S."/>
            <person name="Sobczak M."/>
            <person name="Tenhaken R."/>
            <person name="Grundler F.M."/>
            <person name="Bohlmann H."/>
        </authorList>
    </citation>
    <scope>DISRUPTION PHENOTYPE</scope>
    <scope>INDUCTION</scope>
</reference>
<comment type="function">
    <text evidence="2">Involved in the biosynthesis of UDP-glucuronic acid (UDP-GlcA), providing nucleotide sugars for cell-wall polymers.</text>
</comment>
<comment type="catalytic activity">
    <reaction evidence="2">
        <text>UDP-alpha-D-glucose + 2 NAD(+) + H2O = UDP-alpha-D-glucuronate + 2 NADH + 3 H(+)</text>
        <dbReference type="Rhea" id="RHEA:23596"/>
        <dbReference type="ChEBI" id="CHEBI:15377"/>
        <dbReference type="ChEBI" id="CHEBI:15378"/>
        <dbReference type="ChEBI" id="CHEBI:57540"/>
        <dbReference type="ChEBI" id="CHEBI:57945"/>
        <dbReference type="ChEBI" id="CHEBI:58052"/>
        <dbReference type="ChEBI" id="CHEBI:58885"/>
        <dbReference type="EC" id="1.1.1.22"/>
    </reaction>
    <physiologicalReaction direction="left-to-right" evidence="7">
        <dbReference type="Rhea" id="RHEA:23597"/>
    </physiologicalReaction>
</comment>
<comment type="activity regulation">
    <text evidence="2">Inhibited by UDP-xylose.</text>
</comment>
<comment type="pathway">
    <text evidence="7">Nucleotide-sugar biosynthesis; UDP-alpha-D-glucuronate biosynthesis; UDP-alpha-D-glucuronate from UDP-alpha-D-glucose: step 1/1.</text>
</comment>
<comment type="developmental stage">
    <text evidence="3">Restricted expression to the primary shoot in young seedlings. Later detected in hypocotyl, leaves and flowers.</text>
</comment>
<comment type="induction">
    <text evidence="4">Specifically induced by H.schachtii (cyst nematodes) in nematode-induced syncytia.</text>
</comment>
<comment type="disruption phenotype">
    <text evidence="4">No visible phenotype.</text>
</comment>
<comment type="similarity">
    <text evidence="5">Belongs to the UDP-glucose/GDP-mannose dehydrogenase family.</text>
</comment>
<comment type="caution">
    <text evidence="6">Was originally assigned as UGD4.</text>
</comment>
<sequence length="481" mass="52972">MVKICCIGAGYVGGPTMAVMALKCPEIEVVVVDISEPRINAWNSDRLPIYEPGLEDVVKQCRGKNLFFSTDVEKHVFESDIVFVSVNTPTKTQGLGAGKAADLTYWESAARMIADVSKSSKIVVEKSTVPVRTAEAIEKILTHNSKGIEFQILSNPEFLAEGTAIKDLYNPDRVLIGGRDTAAGQKAIKALRDVYAHWVPVEQIICTNLWSAELSKLAANAFLAQRISSVNAMSALCEATGADVTQVAHAVGTDTRIGPKFLNASVGFGGSCFQKDILNLIYICECNGLPEAANYWKQVVKVNDYQKIRFANRVVSSMFNTVSGKKIAILGFAFKKDTGDTRETPAIDVCNRLVADKAKLSIYDPQVLEEQIRRDLSMARFDWDHPVPLQQIKAEGISEQVNVVSDAYEATKDAHGLCVLTEWDEFKSLDFKKIFDNMQKPAFVFDGRNVVDAVKLREIGFIVYSIGKPLDSWLKDMPAVA</sequence>
<keyword id="KW-0520">NAD</keyword>
<keyword id="KW-0560">Oxidoreductase</keyword>
<keyword id="KW-1185">Reference proteome</keyword>
<gene>
    <name type="primary">UGD1</name>
    <name type="synonym">UGD4</name>
    <name type="ordered locus">At1g26570</name>
    <name type="ORF">T1K7.6</name>
</gene>
<dbReference type="EC" id="1.1.1.22" evidence="2"/>
<dbReference type="EMBL" id="AC013427">
    <property type="protein sequence ID" value="AAF98561.1"/>
    <property type="molecule type" value="Genomic_DNA"/>
</dbReference>
<dbReference type="EMBL" id="CP002684">
    <property type="protein sequence ID" value="AEE30705.1"/>
    <property type="molecule type" value="Genomic_DNA"/>
</dbReference>
<dbReference type="EMBL" id="AY070758">
    <property type="protein sequence ID" value="AAL50096.1"/>
    <property type="molecule type" value="mRNA"/>
</dbReference>
<dbReference type="EMBL" id="AY143922">
    <property type="protein sequence ID" value="AAN28861.1"/>
    <property type="molecule type" value="mRNA"/>
</dbReference>
<dbReference type="EMBL" id="AY084436">
    <property type="protein sequence ID" value="AAM61009.1"/>
    <property type="molecule type" value="mRNA"/>
</dbReference>
<dbReference type="PIR" id="G86392">
    <property type="entry name" value="G86392"/>
</dbReference>
<dbReference type="RefSeq" id="NP_173979.1">
    <property type="nucleotide sequence ID" value="NM_102419.4"/>
</dbReference>
<dbReference type="SMR" id="Q9FZE1"/>
<dbReference type="BioGRID" id="24433">
    <property type="interactions" value="3"/>
</dbReference>
<dbReference type="FunCoup" id="Q9FZE1">
    <property type="interactions" value="2204"/>
</dbReference>
<dbReference type="IntAct" id="Q9FZE1">
    <property type="interactions" value="2"/>
</dbReference>
<dbReference type="STRING" id="3702.Q9FZE1"/>
<dbReference type="iPTMnet" id="Q9FZE1"/>
<dbReference type="PaxDb" id="3702-AT1G26570.1"/>
<dbReference type="ProteomicsDB" id="245296"/>
<dbReference type="EnsemblPlants" id="AT1G26570.1">
    <property type="protein sequence ID" value="AT1G26570.1"/>
    <property type="gene ID" value="AT1G26570"/>
</dbReference>
<dbReference type="GeneID" id="839197"/>
<dbReference type="Gramene" id="AT1G26570.1">
    <property type="protein sequence ID" value="AT1G26570.1"/>
    <property type="gene ID" value="AT1G26570"/>
</dbReference>
<dbReference type="KEGG" id="ath:AT1G26570"/>
<dbReference type="Araport" id="AT1G26570"/>
<dbReference type="TAIR" id="AT1G26570">
    <property type="gene designation" value="UGD1"/>
</dbReference>
<dbReference type="eggNOG" id="KOG2666">
    <property type="taxonomic scope" value="Eukaryota"/>
</dbReference>
<dbReference type="HOGENOM" id="CLU_023810_7_0_1"/>
<dbReference type="InParanoid" id="Q9FZE1"/>
<dbReference type="OMA" id="WDHPVPL"/>
<dbReference type="OrthoDB" id="5059218at2759"/>
<dbReference type="PhylomeDB" id="Q9FZE1"/>
<dbReference type="BioCyc" id="ARA:AT1G26570-MONOMER"/>
<dbReference type="UniPathway" id="UPA00038">
    <property type="reaction ID" value="UER00491"/>
</dbReference>
<dbReference type="PRO" id="PR:Q9FZE1"/>
<dbReference type="Proteomes" id="UP000006548">
    <property type="component" value="Chromosome 1"/>
</dbReference>
<dbReference type="ExpressionAtlas" id="Q9FZE1">
    <property type="expression patterns" value="baseline and differential"/>
</dbReference>
<dbReference type="GO" id="GO:0051287">
    <property type="term" value="F:NAD binding"/>
    <property type="evidence" value="ECO:0007669"/>
    <property type="project" value="InterPro"/>
</dbReference>
<dbReference type="GO" id="GO:0003979">
    <property type="term" value="F:UDP-glucose 6-dehydrogenase activity"/>
    <property type="evidence" value="ECO:0000314"/>
    <property type="project" value="UniProtKB"/>
</dbReference>
<dbReference type="GO" id="GO:0006065">
    <property type="term" value="P:UDP-glucuronate biosynthetic process"/>
    <property type="evidence" value="ECO:0000314"/>
    <property type="project" value="UniProtKB"/>
</dbReference>
<dbReference type="FunFam" id="1.20.5.100:FF:000001">
    <property type="entry name" value="UDP-glucose 6-dehydrogenase"/>
    <property type="match status" value="1"/>
</dbReference>
<dbReference type="FunFam" id="3.40.50.720:FF:000032">
    <property type="entry name" value="UDP-glucose 6-dehydrogenase"/>
    <property type="match status" value="1"/>
</dbReference>
<dbReference type="FunFam" id="3.40.50.720:FF:000089">
    <property type="entry name" value="UDP-glucose 6-dehydrogenase"/>
    <property type="match status" value="1"/>
</dbReference>
<dbReference type="Gene3D" id="1.20.5.100">
    <property type="entry name" value="Cytochrome c1, transmembrane anchor, C-terminal"/>
    <property type="match status" value="1"/>
</dbReference>
<dbReference type="Gene3D" id="3.40.50.720">
    <property type="entry name" value="NAD(P)-binding Rossmann-like Domain"/>
    <property type="match status" value="2"/>
</dbReference>
<dbReference type="InterPro" id="IPR008927">
    <property type="entry name" value="6-PGluconate_DH-like_C_sf"/>
</dbReference>
<dbReference type="InterPro" id="IPR036291">
    <property type="entry name" value="NAD(P)-bd_dom_sf"/>
</dbReference>
<dbReference type="InterPro" id="IPR017476">
    <property type="entry name" value="UDP-Glc/GDP-Man"/>
</dbReference>
<dbReference type="InterPro" id="IPR014027">
    <property type="entry name" value="UDP-Glc/GDP-Man_DH_C"/>
</dbReference>
<dbReference type="InterPro" id="IPR036220">
    <property type="entry name" value="UDP-Glc/GDP-Man_DH_C_sf"/>
</dbReference>
<dbReference type="InterPro" id="IPR014026">
    <property type="entry name" value="UDP-Glc/GDP-Man_DH_dimer"/>
</dbReference>
<dbReference type="InterPro" id="IPR001732">
    <property type="entry name" value="UDP-Glc/GDP-Man_DH_N"/>
</dbReference>
<dbReference type="InterPro" id="IPR028356">
    <property type="entry name" value="UDPglc_DH_euk"/>
</dbReference>
<dbReference type="NCBIfam" id="TIGR03026">
    <property type="entry name" value="NDP-sugDHase"/>
    <property type="match status" value="1"/>
</dbReference>
<dbReference type="PANTHER" id="PTHR11374:SF53">
    <property type="entry name" value="UDP-GLUCOSE 6-DEHYDROGENASE 1"/>
    <property type="match status" value="1"/>
</dbReference>
<dbReference type="PANTHER" id="PTHR11374">
    <property type="entry name" value="UDP-GLUCOSE DEHYDROGENASE/UDP-MANNAC DEHYDROGENASE"/>
    <property type="match status" value="1"/>
</dbReference>
<dbReference type="Pfam" id="PF00984">
    <property type="entry name" value="UDPG_MGDP_dh"/>
    <property type="match status" value="1"/>
</dbReference>
<dbReference type="Pfam" id="PF03720">
    <property type="entry name" value="UDPG_MGDP_dh_C"/>
    <property type="match status" value="1"/>
</dbReference>
<dbReference type="Pfam" id="PF03721">
    <property type="entry name" value="UDPG_MGDP_dh_N"/>
    <property type="match status" value="1"/>
</dbReference>
<dbReference type="PIRSF" id="PIRSF500133">
    <property type="entry name" value="UDPglc_DH_euk"/>
    <property type="match status" value="1"/>
</dbReference>
<dbReference type="PIRSF" id="PIRSF000124">
    <property type="entry name" value="UDPglc_GDPman_dh"/>
    <property type="match status" value="1"/>
</dbReference>
<dbReference type="SMART" id="SM00984">
    <property type="entry name" value="UDPG_MGDP_dh_C"/>
    <property type="match status" value="1"/>
</dbReference>
<dbReference type="SUPFAM" id="SSF48179">
    <property type="entry name" value="6-phosphogluconate dehydrogenase C-terminal domain-like"/>
    <property type="match status" value="1"/>
</dbReference>
<dbReference type="SUPFAM" id="SSF51735">
    <property type="entry name" value="NAD(P)-binding Rossmann-fold domains"/>
    <property type="match status" value="1"/>
</dbReference>
<dbReference type="SUPFAM" id="SSF52413">
    <property type="entry name" value="UDP-glucose/GDP-mannose dehydrogenase C-terminal domain"/>
    <property type="match status" value="1"/>
</dbReference>
<protein>
    <recommendedName>
        <fullName>UDP-glucose 6-dehydrogenase 1</fullName>
        <shortName>UDP-Glc dehydrogenase 1</shortName>
        <shortName>UDP-GlcDH 1</shortName>
        <shortName>UDPGDH 1</shortName>
        <ecNumber evidence="2">1.1.1.22</ecNumber>
    </recommendedName>
    <alternativeName>
        <fullName>At-UGD1</fullName>
    </alternativeName>
</protein>
<evidence type="ECO:0000250" key="1"/>
<evidence type="ECO:0000269" key="2">
    <source>
    </source>
</evidence>
<evidence type="ECO:0000269" key="3">
    <source>
    </source>
</evidence>
<evidence type="ECO:0000269" key="4">
    <source>
    </source>
</evidence>
<evidence type="ECO:0000305" key="5"/>
<evidence type="ECO:0000305" key="6">
    <source>
    </source>
</evidence>
<evidence type="ECO:0000305" key="7">
    <source>
    </source>
</evidence>
<name>UGDH1_ARATH</name>
<proteinExistence type="evidence at protein level"/>